<gene>
    <name evidence="1" type="primary">patA</name>
    <name type="ordered locus">SNSL254_A3479</name>
</gene>
<proteinExistence type="inferred from homology"/>
<keyword id="KW-0032">Aminotransferase</keyword>
<keyword id="KW-0663">Pyridoxal phosphate</keyword>
<keyword id="KW-0808">Transferase</keyword>
<organism>
    <name type="scientific">Salmonella newport (strain SL254)</name>
    <dbReference type="NCBI Taxonomy" id="423368"/>
    <lineage>
        <taxon>Bacteria</taxon>
        <taxon>Pseudomonadati</taxon>
        <taxon>Pseudomonadota</taxon>
        <taxon>Gammaproteobacteria</taxon>
        <taxon>Enterobacterales</taxon>
        <taxon>Enterobacteriaceae</taxon>
        <taxon>Salmonella</taxon>
    </lineage>
</organism>
<evidence type="ECO:0000255" key="1">
    <source>
        <dbReference type="HAMAP-Rule" id="MF_01276"/>
    </source>
</evidence>
<comment type="function">
    <text evidence="1">Catalyzes the aminotransferase reaction from putrescine to 2-oxoglutarate, leading to glutamate and 4-aminobutanal, which spontaneously cyclizes to form 1-pyrroline. This is the first step in one of two pathways for putrescine degradation, where putrescine is converted into 4-aminobutanoate (gamma-aminobutyrate or GABA) via 4-aminobutanal. Also functions as a cadaverine transaminase in a a L-lysine degradation pathway to succinate that proceeds via cadaverine, glutarate and L-2-hydroxyglutarate.</text>
</comment>
<comment type="catalytic activity">
    <reaction evidence="1">
        <text>an alkane-alpha,omega-diamine + 2-oxoglutarate = an omega-aminoaldehyde + L-glutamate</text>
        <dbReference type="Rhea" id="RHEA:18217"/>
        <dbReference type="Rhea" id="RHEA-COMP:9766"/>
        <dbReference type="Rhea" id="RHEA-COMP:12750"/>
        <dbReference type="ChEBI" id="CHEBI:16810"/>
        <dbReference type="ChEBI" id="CHEBI:29985"/>
        <dbReference type="ChEBI" id="CHEBI:70977"/>
        <dbReference type="ChEBI" id="CHEBI:133427"/>
        <dbReference type="EC" id="2.6.1.29"/>
    </reaction>
    <physiologicalReaction direction="left-to-right" evidence="1">
        <dbReference type="Rhea" id="RHEA:18218"/>
    </physiologicalReaction>
</comment>
<comment type="catalytic activity">
    <reaction evidence="1">
        <text>putrescine + 2-oxoglutarate = 1-pyrroline + L-glutamate + H2O</text>
        <dbReference type="Rhea" id="RHEA:12268"/>
        <dbReference type="ChEBI" id="CHEBI:15377"/>
        <dbReference type="ChEBI" id="CHEBI:16810"/>
        <dbReference type="ChEBI" id="CHEBI:29985"/>
        <dbReference type="ChEBI" id="CHEBI:36781"/>
        <dbReference type="ChEBI" id="CHEBI:326268"/>
        <dbReference type="EC" id="2.6.1.82"/>
    </reaction>
    <physiologicalReaction direction="left-to-right" evidence="1">
        <dbReference type="Rhea" id="RHEA:12269"/>
    </physiologicalReaction>
</comment>
<comment type="catalytic activity">
    <reaction evidence="1">
        <text>cadaverine + 2-oxoglutarate = 5-aminopentanal + L-glutamate</text>
        <dbReference type="Rhea" id="RHEA:61624"/>
        <dbReference type="ChEBI" id="CHEBI:16810"/>
        <dbReference type="ChEBI" id="CHEBI:29985"/>
        <dbReference type="ChEBI" id="CHEBI:58384"/>
        <dbReference type="ChEBI" id="CHEBI:144896"/>
    </reaction>
    <physiologicalReaction direction="left-to-right" evidence="1">
        <dbReference type="Rhea" id="RHEA:61625"/>
    </physiologicalReaction>
</comment>
<comment type="cofactor">
    <cofactor evidence="1">
        <name>pyridoxal 5'-phosphate</name>
        <dbReference type="ChEBI" id="CHEBI:597326"/>
    </cofactor>
</comment>
<comment type="pathway">
    <text evidence="1">Amine and polyamine degradation; putrescine degradation; 4-aminobutanal from putrescine (transaminase route): step 1/1.</text>
</comment>
<comment type="similarity">
    <text evidence="1">Belongs to the class-III pyridoxal-phosphate-dependent aminotransferase family. Putrescine aminotransferase subfamily.</text>
</comment>
<accession>B4T688</accession>
<sequence>MNRLPSSASALACSAHALNLIEKRTLNHEEMKALNREVIDYFKEHVNPGFLEYRKSVTAGGDYGAVEWQAGSLNTLVDTQGQEFIDCLGGFGIFNVGHRNPVVVSAVQNQLAKQPLHSQELLDPLRAMLAKTLAALTPGKLKYSFFCNSGTESVEAALKLAKAYQSPRGKFTFIATSGAFHGKSLGALSATAKSTFRRPFMPLLPGFRHVPFGNIDAMSMAFSEGKKTGDEIAAVILEPIQGEGGVILPPQGYLTEVRKLCDEFGALMILDEVQTGMGRTGKMFACEHENVQPDILCLAKALGGGVMPIGATIATEEVFSVLFDNPFLHTTTFGGNPLACAAALATINVLLEQNLPAQAEQKGDTLLDGFRQLAREYPNLVHDARGKGMLMAIEFVDNETGYRFASEMFRQRVLVAGTLNNAKTIRIEPPLTLTIELCEQVLKSARNALAAMQVSVEEV</sequence>
<dbReference type="EC" id="2.6.1.82" evidence="1"/>
<dbReference type="EC" id="2.6.1.29" evidence="1"/>
<dbReference type="EMBL" id="CP001113">
    <property type="protein sequence ID" value="ACF64513.1"/>
    <property type="molecule type" value="Genomic_DNA"/>
</dbReference>
<dbReference type="SMR" id="B4T688"/>
<dbReference type="KEGG" id="see:SNSL254_A3479"/>
<dbReference type="HOGENOM" id="CLU_016922_10_0_6"/>
<dbReference type="UniPathway" id="UPA00188">
    <property type="reaction ID" value="UER00290"/>
</dbReference>
<dbReference type="Proteomes" id="UP000008824">
    <property type="component" value="Chromosome"/>
</dbReference>
<dbReference type="GO" id="GO:0019161">
    <property type="term" value="F:diamine transaminase activity"/>
    <property type="evidence" value="ECO:0007669"/>
    <property type="project" value="UniProtKB-EC"/>
</dbReference>
<dbReference type="GO" id="GO:0042802">
    <property type="term" value="F:identical protein binding"/>
    <property type="evidence" value="ECO:0007669"/>
    <property type="project" value="TreeGrafter"/>
</dbReference>
<dbReference type="GO" id="GO:0033094">
    <property type="term" value="F:putrescine--2-oxoglutarate transaminase activity"/>
    <property type="evidence" value="ECO:0007669"/>
    <property type="project" value="UniProtKB-UniRule"/>
</dbReference>
<dbReference type="GO" id="GO:0030170">
    <property type="term" value="F:pyridoxal phosphate binding"/>
    <property type="evidence" value="ECO:0007669"/>
    <property type="project" value="UniProtKB-UniRule"/>
</dbReference>
<dbReference type="GO" id="GO:0019477">
    <property type="term" value="P:L-lysine catabolic process"/>
    <property type="evidence" value="ECO:0007669"/>
    <property type="project" value="UniProtKB-UniRule"/>
</dbReference>
<dbReference type="GO" id="GO:0009447">
    <property type="term" value="P:putrescine catabolic process"/>
    <property type="evidence" value="ECO:0007669"/>
    <property type="project" value="UniProtKB-UniRule"/>
</dbReference>
<dbReference type="CDD" id="cd00610">
    <property type="entry name" value="OAT_like"/>
    <property type="match status" value="1"/>
</dbReference>
<dbReference type="FunFam" id="3.40.640.10:FF:000004">
    <property type="entry name" value="Acetylornithine aminotransferase"/>
    <property type="match status" value="1"/>
</dbReference>
<dbReference type="Gene3D" id="3.90.1150.10">
    <property type="entry name" value="Aspartate Aminotransferase, domain 1"/>
    <property type="match status" value="1"/>
</dbReference>
<dbReference type="Gene3D" id="3.40.640.10">
    <property type="entry name" value="Type I PLP-dependent aspartate aminotransferase-like (Major domain)"/>
    <property type="match status" value="1"/>
</dbReference>
<dbReference type="HAMAP" id="MF_01276">
    <property type="entry name" value="Putres_aminotrans_3"/>
    <property type="match status" value="1"/>
</dbReference>
<dbReference type="InterPro" id="IPR005814">
    <property type="entry name" value="Aminotrans_3"/>
</dbReference>
<dbReference type="InterPro" id="IPR049704">
    <property type="entry name" value="Aminotrans_3_PPA_site"/>
</dbReference>
<dbReference type="InterPro" id="IPR050103">
    <property type="entry name" value="Class-III_PLP-dep_AT"/>
</dbReference>
<dbReference type="InterPro" id="IPR017747">
    <property type="entry name" value="Putrescine_aminotransferase"/>
</dbReference>
<dbReference type="InterPro" id="IPR015424">
    <property type="entry name" value="PyrdxlP-dep_Trfase"/>
</dbReference>
<dbReference type="InterPro" id="IPR015421">
    <property type="entry name" value="PyrdxlP-dep_Trfase_major"/>
</dbReference>
<dbReference type="InterPro" id="IPR015422">
    <property type="entry name" value="PyrdxlP-dep_Trfase_small"/>
</dbReference>
<dbReference type="NCBIfam" id="NF008570">
    <property type="entry name" value="PRK11522.1"/>
    <property type="match status" value="1"/>
</dbReference>
<dbReference type="NCBIfam" id="TIGR03372">
    <property type="entry name" value="putres_am_tran"/>
    <property type="match status" value="1"/>
</dbReference>
<dbReference type="PANTHER" id="PTHR11986">
    <property type="entry name" value="AMINOTRANSFERASE CLASS III"/>
    <property type="match status" value="1"/>
</dbReference>
<dbReference type="PANTHER" id="PTHR11986:SF112">
    <property type="entry name" value="PUTRESCINE AMINOTRANSFERASE"/>
    <property type="match status" value="1"/>
</dbReference>
<dbReference type="Pfam" id="PF00202">
    <property type="entry name" value="Aminotran_3"/>
    <property type="match status" value="1"/>
</dbReference>
<dbReference type="PIRSF" id="PIRSF000521">
    <property type="entry name" value="Transaminase_4ab_Lys_Orn"/>
    <property type="match status" value="1"/>
</dbReference>
<dbReference type="SUPFAM" id="SSF53383">
    <property type="entry name" value="PLP-dependent transferases"/>
    <property type="match status" value="1"/>
</dbReference>
<dbReference type="PROSITE" id="PS00600">
    <property type="entry name" value="AA_TRANSFER_CLASS_3"/>
    <property type="match status" value="1"/>
</dbReference>
<feature type="chain" id="PRO_1000140281" description="Putrescine aminotransferase">
    <location>
        <begin position="1"/>
        <end position="459"/>
    </location>
</feature>
<feature type="binding site" description="in other chain" evidence="1">
    <location>
        <begin position="150"/>
        <end position="151"/>
    </location>
    <ligand>
        <name>pyridoxal 5'-phosphate</name>
        <dbReference type="ChEBI" id="CHEBI:597326"/>
        <note>ligand shared between dimeric partners</note>
    </ligand>
</feature>
<feature type="binding site" description="in other chain" evidence="1">
    <location>
        <position position="274"/>
    </location>
    <ligand>
        <name>pyridoxal 5'-phosphate</name>
        <dbReference type="ChEBI" id="CHEBI:597326"/>
        <note>ligand shared between dimeric partners</note>
    </ligand>
</feature>
<feature type="binding site" evidence="1">
    <location>
        <position position="332"/>
    </location>
    <ligand>
        <name>pyridoxal 5'-phosphate</name>
        <dbReference type="ChEBI" id="CHEBI:597326"/>
        <note>ligand shared between dimeric partners</note>
    </ligand>
</feature>
<feature type="modified residue" description="N6-(pyridoxal phosphate)lysine" evidence="1">
    <location>
        <position position="300"/>
    </location>
</feature>
<name>PAT_SALNS</name>
<reference key="1">
    <citation type="journal article" date="2011" name="J. Bacteriol.">
        <title>Comparative genomics of 28 Salmonella enterica isolates: evidence for CRISPR-mediated adaptive sublineage evolution.</title>
        <authorList>
            <person name="Fricke W.F."/>
            <person name="Mammel M.K."/>
            <person name="McDermott P.F."/>
            <person name="Tartera C."/>
            <person name="White D.G."/>
            <person name="Leclerc J.E."/>
            <person name="Ravel J."/>
            <person name="Cebula T.A."/>
        </authorList>
    </citation>
    <scope>NUCLEOTIDE SEQUENCE [LARGE SCALE GENOMIC DNA]</scope>
    <source>
        <strain>SL254</strain>
    </source>
</reference>
<protein>
    <recommendedName>
        <fullName evidence="1">Putrescine aminotransferase</fullName>
        <shortName evidence="1">PAT</shortName>
        <shortName evidence="1">PATase</shortName>
        <ecNumber evidence="1">2.6.1.82</ecNumber>
    </recommendedName>
    <alternativeName>
        <fullName evidence="1">Cadaverine transaminase</fullName>
    </alternativeName>
    <alternativeName>
        <fullName evidence="1">Diamine transaminase</fullName>
        <ecNumber evidence="1">2.6.1.29</ecNumber>
    </alternativeName>
    <alternativeName>
        <fullName evidence="1">Putrescine transaminase</fullName>
    </alternativeName>
    <alternativeName>
        <fullName evidence="1">Putrescine--2-oxoglutaric acid transaminase</fullName>
    </alternativeName>
</protein>